<accession>A3D5Q5</accession>
<evidence type="ECO:0000255" key="1">
    <source>
        <dbReference type="HAMAP-Rule" id="MF_00004"/>
    </source>
</evidence>
<keyword id="KW-0963">Cytoplasm</keyword>
<keyword id="KW-0328">Glycosyltransferase</keyword>
<keyword id="KW-0660">Purine salvage</keyword>
<keyword id="KW-1185">Reference proteome</keyword>
<keyword id="KW-0808">Transferase</keyword>
<comment type="function">
    <text evidence="1">Catalyzes a salvage reaction resulting in the formation of AMP, that is energically less costly than de novo synthesis.</text>
</comment>
<comment type="catalytic activity">
    <reaction evidence="1">
        <text>AMP + diphosphate = 5-phospho-alpha-D-ribose 1-diphosphate + adenine</text>
        <dbReference type="Rhea" id="RHEA:16609"/>
        <dbReference type="ChEBI" id="CHEBI:16708"/>
        <dbReference type="ChEBI" id="CHEBI:33019"/>
        <dbReference type="ChEBI" id="CHEBI:58017"/>
        <dbReference type="ChEBI" id="CHEBI:456215"/>
        <dbReference type="EC" id="2.4.2.7"/>
    </reaction>
</comment>
<comment type="pathway">
    <text evidence="1">Purine metabolism; AMP biosynthesis via salvage pathway; AMP from adenine: step 1/1.</text>
</comment>
<comment type="subunit">
    <text evidence="1">Homodimer.</text>
</comment>
<comment type="subcellular location">
    <subcellularLocation>
        <location evidence="1">Cytoplasm</location>
    </subcellularLocation>
</comment>
<comment type="similarity">
    <text evidence="1">Belongs to the purine/pyrimidine phosphoribosyltransferase family.</text>
</comment>
<reference key="1">
    <citation type="submission" date="2007-02" db="EMBL/GenBank/DDBJ databases">
        <title>Complete sequence of chromosome of Shewanella baltica OS155.</title>
        <authorList>
            <consortium name="US DOE Joint Genome Institute"/>
            <person name="Copeland A."/>
            <person name="Lucas S."/>
            <person name="Lapidus A."/>
            <person name="Barry K."/>
            <person name="Detter J.C."/>
            <person name="Glavina del Rio T."/>
            <person name="Hammon N."/>
            <person name="Israni S."/>
            <person name="Dalin E."/>
            <person name="Tice H."/>
            <person name="Pitluck S."/>
            <person name="Sims D.R."/>
            <person name="Brettin T."/>
            <person name="Bruce D."/>
            <person name="Han C."/>
            <person name="Tapia R."/>
            <person name="Brainard J."/>
            <person name="Schmutz J."/>
            <person name="Larimer F."/>
            <person name="Land M."/>
            <person name="Hauser L."/>
            <person name="Kyrpides N."/>
            <person name="Mikhailova N."/>
            <person name="Brettar I."/>
            <person name="Klappenbach J."/>
            <person name="Konstantinidis K."/>
            <person name="Rodrigues J."/>
            <person name="Tiedje J."/>
            <person name="Richardson P."/>
        </authorList>
    </citation>
    <scope>NUCLEOTIDE SEQUENCE [LARGE SCALE GENOMIC DNA]</scope>
    <source>
        <strain>OS155 / ATCC BAA-1091</strain>
    </source>
</reference>
<protein>
    <recommendedName>
        <fullName evidence="1">Adenine phosphoribosyltransferase</fullName>
        <shortName evidence="1">APRT</shortName>
        <ecNumber evidence="1">2.4.2.7</ecNumber>
    </recommendedName>
</protein>
<proteinExistence type="inferred from homology"/>
<dbReference type="EC" id="2.4.2.7" evidence="1"/>
<dbReference type="EMBL" id="CP000563">
    <property type="protein sequence ID" value="ABN62068.1"/>
    <property type="molecule type" value="Genomic_DNA"/>
</dbReference>
<dbReference type="SMR" id="A3D5Q5"/>
<dbReference type="STRING" id="325240.Sbal_2575"/>
<dbReference type="KEGG" id="sbl:Sbal_2575"/>
<dbReference type="HOGENOM" id="CLU_063339_3_0_6"/>
<dbReference type="UniPathway" id="UPA00588">
    <property type="reaction ID" value="UER00646"/>
</dbReference>
<dbReference type="Proteomes" id="UP000001557">
    <property type="component" value="Chromosome"/>
</dbReference>
<dbReference type="GO" id="GO:0005737">
    <property type="term" value="C:cytoplasm"/>
    <property type="evidence" value="ECO:0007669"/>
    <property type="project" value="UniProtKB-SubCell"/>
</dbReference>
<dbReference type="GO" id="GO:0002055">
    <property type="term" value="F:adenine binding"/>
    <property type="evidence" value="ECO:0007669"/>
    <property type="project" value="TreeGrafter"/>
</dbReference>
<dbReference type="GO" id="GO:0003999">
    <property type="term" value="F:adenine phosphoribosyltransferase activity"/>
    <property type="evidence" value="ECO:0007669"/>
    <property type="project" value="UniProtKB-UniRule"/>
</dbReference>
<dbReference type="GO" id="GO:0016208">
    <property type="term" value="F:AMP binding"/>
    <property type="evidence" value="ECO:0007669"/>
    <property type="project" value="TreeGrafter"/>
</dbReference>
<dbReference type="GO" id="GO:0006168">
    <property type="term" value="P:adenine salvage"/>
    <property type="evidence" value="ECO:0007669"/>
    <property type="project" value="InterPro"/>
</dbReference>
<dbReference type="GO" id="GO:0044209">
    <property type="term" value="P:AMP salvage"/>
    <property type="evidence" value="ECO:0007669"/>
    <property type="project" value="UniProtKB-UniRule"/>
</dbReference>
<dbReference type="GO" id="GO:0006166">
    <property type="term" value="P:purine ribonucleoside salvage"/>
    <property type="evidence" value="ECO:0007669"/>
    <property type="project" value="UniProtKB-KW"/>
</dbReference>
<dbReference type="CDD" id="cd06223">
    <property type="entry name" value="PRTases_typeI"/>
    <property type="match status" value="1"/>
</dbReference>
<dbReference type="FunFam" id="3.40.50.2020:FF:000004">
    <property type="entry name" value="Adenine phosphoribosyltransferase"/>
    <property type="match status" value="1"/>
</dbReference>
<dbReference type="Gene3D" id="3.40.50.2020">
    <property type="match status" value="1"/>
</dbReference>
<dbReference type="HAMAP" id="MF_00004">
    <property type="entry name" value="Aden_phosphoribosyltr"/>
    <property type="match status" value="1"/>
</dbReference>
<dbReference type="InterPro" id="IPR005764">
    <property type="entry name" value="Ade_phspho_trans"/>
</dbReference>
<dbReference type="InterPro" id="IPR000836">
    <property type="entry name" value="PRibTrfase_dom"/>
</dbReference>
<dbReference type="InterPro" id="IPR029057">
    <property type="entry name" value="PRTase-like"/>
</dbReference>
<dbReference type="InterPro" id="IPR050054">
    <property type="entry name" value="UPRTase/APRTase"/>
</dbReference>
<dbReference type="NCBIfam" id="TIGR01090">
    <property type="entry name" value="apt"/>
    <property type="match status" value="1"/>
</dbReference>
<dbReference type="NCBIfam" id="NF002632">
    <property type="entry name" value="PRK02304.1-1"/>
    <property type="match status" value="1"/>
</dbReference>
<dbReference type="NCBIfam" id="NF002634">
    <property type="entry name" value="PRK02304.1-3"/>
    <property type="match status" value="1"/>
</dbReference>
<dbReference type="NCBIfam" id="NF002636">
    <property type="entry name" value="PRK02304.1-5"/>
    <property type="match status" value="1"/>
</dbReference>
<dbReference type="PANTHER" id="PTHR32315">
    <property type="entry name" value="ADENINE PHOSPHORIBOSYLTRANSFERASE"/>
    <property type="match status" value="1"/>
</dbReference>
<dbReference type="PANTHER" id="PTHR32315:SF3">
    <property type="entry name" value="ADENINE PHOSPHORIBOSYLTRANSFERASE"/>
    <property type="match status" value="1"/>
</dbReference>
<dbReference type="Pfam" id="PF00156">
    <property type="entry name" value="Pribosyltran"/>
    <property type="match status" value="1"/>
</dbReference>
<dbReference type="SUPFAM" id="SSF53271">
    <property type="entry name" value="PRTase-like"/>
    <property type="match status" value="1"/>
</dbReference>
<dbReference type="PROSITE" id="PS00103">
    <property type="entry name" value="PUR_PYR_PR_TRANSFER"/>
    <property type="match status" value="1"/>
</dbReference>
<sequence>MMAMNTETLSLIKQSIKTIPNYPKEGILFRDVTSLLENAAAYKATIDLLVEHYRGQGFTKIVGTEARGFLFGAPLALELGVGFVPVRKPGKLPRATISQSYELEYGHDSLEIHTDAINPNDKVLVVDDLLATGGTIEATVKLIRQLGGEVKHAAFVISLPDLGGEARLTALGLELVKLCEFEGE</sequence>
<gene>
    <name evidence="1" type="primary">apt</name>
    <name type="ordered locus">Sbal_2575</name>
</gene>
<feature type="chain" id="PRO_0000321401" description="Adenine phosphoribosyltransferase">
    <location>
        <begin position="1"/>
        <end position="184"/>
    </location>
</feature>
<organism>
    <name type="scientific">Shewanella baltica (strain OS155 / ATCC BAA-1091)</name>
    <dbReference type="NCBI Taxonomy" id="325240"/>
    <lineage>
        <taxon>Bacteria</taxon>
        <taxon>Pseudomonadati</taxon>
        <taxon>Pseudomonadota</taxon>
        <taxon>Gammaproteobacteria</taxon>
        <taxon>Alteromonadales</taxon>
        <taxon>Shewanellaceae</taxon>
        <taxon>Shewanella</taxon>
    </lineage>
</organism>
<name>APT_SHEB5</name>